<organism>
    <name type="scientific">Exiguobacterium sibiricum (strain DSM 17290 / CCUG 55495 / CIP 109462 / JCM 13490 / 255-15)</name>
    <dbReference type="NCBI Taxonomy" id="262543"/>
    <lineage>
        <taxon>Bacteria</taxon>
        <taxon>Bacillati</taxon>
        <taxon>Bacillota</taxon>
        <taxon>Bacilli</taxon>
        <taxon>Bacillales</taxon>
        <taxon>Bacillales Family XII. Incertae Sedis</taxon>
        <taxon>Exiguobacterium</taxon>
    </lineage>
</organism>
<sequence length="49" mass="5979">MRVKITLACTETGDRTYITKKNKRNNPERLELKKYNPRLRKHTLHREVK</sequence>
<protein>
    <recommendedName>
        <fullName evidence="1">Large ribosomal subunit protein bL33B</fullName>
    </recommendedName>
    <alternativeName>
        <fullName evidence="1">50S ribosomal protein L33 2</fullName>
    </alternativeName>
</protein>
<evidence type="ECO:0000255" key="1">
    <source>
        <dbReference type="HAMAP-Rule" id="MF_00294"/>
    </source>
</evidence>
<accession>B1YLB5</accession>
<dbReference type="EMBL" id="CP001022">
    <property type="protein sequence ID" value="ACB60347.1"/>
    <property type="molecule type" value="Genomic_DNA"/>
</dbReference>
<dbReference type="SMR" id="B1YLB5"/>
<dbReference type="STRING" id="262543.Exig_0867"/>
<dbReference type="KEGG" id="esi:Exig_0867"/>
<dbReference type="eggNOG" id="COG0267">
    <property type="taxonomic scope" value="Bacteria"/>
</dbReference>
<dbReference type="HOGENOM" id="CLU_190949_3_0_9"/>
<dbReference type="OrthoDB" id="197660at2"/>
<dbReference type="Proteomes" id="UP000001681">
    <property type="component" value="Chromosome"/>
</dbReference>
<dbReference type="GO" id="GO:0005737">
    <property type="term" value="C:cytoplasm"/>
    <property type="evidence" value="ECO:0007669"/>
    <property type="project" value="UniProtKB-ARBA"/>
</dbReference>
<dbReference type="GO" id="GO:1990904">
    <property type="term" value="C:ribonucleoprotein complex"/>
    <property type="evidence" value="ECO:0007669"/>
    <property type="project" value="UniProtKB-KW"/>
</dbReference>
<dbReference type="GO" id="GO:0005840">
    <property type="term" value="C:ribosome"/>
    <property type="evidence" value="ECO:0007669"/>
    <property type="project" value="UniProtKB-KW"/>
</dbReference>
<dbReference type="GO" id="GO:0003735">
    <property type="term" value="F:structural constituent of ribosome"/>
    <property type="evidence" value="ECO:0007669"/>
    <property type="project" value="InterPro"/>
</dbReference>
<dbReference type="GO" id="GO:0006412">
    <property type="term" value="P:translation"/>
    <property type="evidence" value="ECO:0007669"/>
    <property type="project" value="UniProtKB-UniRule"/>
</dbReference>
<dbReference type="Gene3D" id="2.20.28.120">
    <property type="entry name" value="Ribosomal protein L33"/>
    <property type="match status" value="1"/>
</dbReference>
<dbReference type="HAMAP" id="MF_00294">
    <property type="entry name" value="Ribosomal_bL33"/>
    <property type="match status" value="1"/>
</dbReference>
<dbReference type="InterPro" id="IPR001705">
    <property type="entry name" value="Ribosomal_bL33"/>
</dbReference>
<dbReference type="InterPro" id="IPR038584">
    <property type="entry name" value="Ribosomal_bL33_sf"/>
</dbReference>
<dbReference type="InterPro" id="IPR011332">
    <property type="entry name" value="Ribosomal_zn-bd"/>
</dbReference>
<dbReference type="NCBIfam" id="NF001764">
    <property type="entry name" value="PRK00504.1"/>
    <property type="match status" value="1"/>
</dbReference>
<dbReference type="NCBIfam" id="NF001860">
    <property type="entry name" value="PRK00595.1"/>
    <property type="match status" value="1"/>
</dbReference>
<dbReference type="NCBIfam" id="TIGR01023">
    <property type="entry name" value="rpmG_bact"/>
    <property type="match status" value="1"/>
</dbReference>
<dbReference type="PANTHER" id="PTHR43168">
    <property type="entry name" value="50S RIBOSOMAL PROTEIN L33, CHLOROPLASTIC"/>
    <property type="match status" value="1"/>
</dbReference>
<dbReference type="PANTHER" id="PTHR43168:SF2">
    <property type="entry name" value="LARGE RIBOSOMAL SUBUNIT PROTEIN BL33C"/>
    <property type="match status" value="1"/>
</dbReference>
<dbReference type="Pfam" id="PF00471">
    <property type="entry name" value="Ribosomal_L33"/>
    <property type="match status" value="1"/>
</dbReference>
<dbReference type="SUPFAM" id="SSF57829">
    <property type="entry name" value="Zn-binding ribosomal proteins"/>
    <property type="match status" value="1"/>
</dbReference>
<proteinExistence type="inferred from homology"/>
<comment type="similarity">
    <text evidence="1">Belongs to the bacterial ribosomal protein bL33 family.</text>
</comment>
<reference key="1">
    <citation type="submission" date="2008-04" db="EMBL/GenBank/DDBJ databases">
        <title>Complete sequence of chromosome of Exiguobacterium sibiricum 255-15.</title>
        <authorList>
            <consortium name="US DOE Joint Genome Institute"/>
            <person name="Copeland A."/>
            <person name="Lucas S."/>
            <person name="Lapidus A."/>
            <person name="Glavina del Rio T."/>
            <person name="Dalin E."/>
            <person name="Tice H."/>
            <person name="Bruce D."/>
            <person name="Goodwin L."/>
            <person name="Pitluck S."/>
            <person name="Kiss H."/>
            <person name="Chertkov O."/>
            <person name="Monk C."/>
            <person name="Brettin T."/>
            <person name="Detter J.C."/>
            <person name="Han C."/>
            <person name="Kuske C.R."/>
            <person name="Schmutz J."/>
            <person name="Larimer F."/>
            <person name="Land M."/>
            <person name="Hauser L."/>
            <person name="Kyrpides N."/>
            <person name="Mikhailova N."/>
            <person name="Vishnivetskaya T."/>
            <person name="Rodrigues D.F."/>
            <person name="Gilichinsky D."/>
            <person name="Tiedje J."/>
            <person name="Richardson P."/>
        </authorList>
    </citation>
    <scope>NUCLEOTIDE SEQUENCE [LARGE SCALE GENOMIC DNA]</scope>
    <source>
        <strain>DSM 17290 / CCUG 55495 / CIP 109462 / JCM 13490 / 255-15</strain>
    </source>
</reference>
<feature type="chain" id="PRO_0000356458" description="Large ribosomal subunit protein bL33B">
    <location>
        <begin position="1"/>
        <end position="49"/>
    </location>
</feature>
<keyword id="KW-1185">Reference proteome</keyword>
<keyword id="KW-0687">Ribonucleoprotein</keyword>
<keyword id="KW-0689">Ribosomal protein</keyword>
<gene>
    <name evidence="1" type="primary">rpmG2</name>
    <name type="ordered locus">Exig_0867</name>
</gene>
<name>RL332_EXIS2</name>